<proteinExistence type="evidence at protein level"/>
<keyword id="KW-0067">ATP-binding</keyword>
<keyword id="KW-0072">Autophagy</keyword>
<keyword id="KW-0963">Cytoplasm</keyword>
<keyword id="KW-0418">Kinase</keyword>
<keyword id="KW-0460">Magnesium</keyword>
<keyword id="KW-0472">Membrane</keyword>
<keyword id="KW-0479">Metal-binding</keyword>
<keyword id="KW-0496">Mitochondrion</keyword>
<keyword id="KW-0999">Mitochondrion inner membrane</keyword>
<keyword id="KW-1000">Mitochondrion outer membrane</keyword>
<keyword id="KW-0547">Nucleotide-binding</keyword>
<keyword id="KW-0597">Phosphoprotein</keyword>
<keyword id="KW-1185">Reference proteome</keyword>
<keyword id="KW-0723">Serine/threonine-protein kinase</keyword>
<keyword id="KW-0808">Transferase</keyword>
<keyword id="KW-0809">Transit peptide</keyword>
<keyword id="KW-0812">Transmembrane</keyword>
<keyword id="KW-1133">Transmembrane helix</keyword>
<sequence length="580" mass="63219">MAVRQALGRGLQLGRALLLRFAPKPGPVSGWGKPGPGAAWGRGERPGRVSSPGAQPRPLGLPLPDRYRFFRQSVAGLAARIQRQFVVRARGGAGPCGRAVFLAFGLGLGLIEEKQAESRRAASACQEIQAIFTQKNKQVSDPLDTRRWQGFRLEDYLIGQAIGKGCNAAVYEATMPTLPQHLEKAKHLGLLGKGPDVVSKGADGEQAPGAPAFPFAIKMMWNISAGSSSEAILSKMSQELVPASRMALDGEYGAVTYRRSRDGPKQLAPHPNIIRVFRAFTSSVPLLPGALADYPDMLPPHYYPEGLGHGRTLFLVMKNYPCTLRQYLEEQTPSSRLATMMTLQLLEGVDHLVQQGIAHRDLKSDNILVEWDSDGCPWLVISDFGCCLADERVGLQLPFNSSSVERGGNGSLMAPEVSTAHSGPHAVIDYSKADTWAVGAIAYEIFGLANPFYGQGSAHLESRSYQEAQLPEMPKSVPPETRQLVRSLLQREANKRPSARIAANVLHLSLWGEHLLALKNLKLDKMIAWLLQQSAATLLADRLREKSCVETKLQMLFLANLECEALCQAALLLSSWRAAP</sequence>
<name>PINK1_RAT</name>
<feature type="transit peptide" description="Mitochondrion" evidence="3">
    <location>
        <begin position="1"/>
        <end position="77"/>
    </location>
</feature>
<feature type="chain" id="PRO_0000449049" description="Serine/threonine-protein kinase PINK1, mitochondrial" evidence="3">
    <location>
        <begin position="78"/>
        <end position="580"/>
    </location>
</feature>
<feature type="transmembrane region" description="Helical" evidence="3">
    <location>
        <begin position="94"/>
        <end position="110"/>
    </location>
</feature>
<feature type="domain" description="Protein kinase" evidence="4">
    <location>
        <begin position="156"/>
        <end position="510"/>
    </location>
</feature>
<feature type="region of interest" description="Disordered" evidence="5">
    <location>
        <begin position="28"/>
        <end position="60"/>
    </location>
</feature>
<feature type="region of interest" description="Required for outer membrane localization" evidence="2">
    <location>
        <begin position="111"/>
        <end position="117"/>
    </location>
</feature>
<feature type="active site" description="Proton acceptor" evidence="4">
    <location>
        <position position="361"/>
    </location>
</feature>
<feature type="binding site" evidence="4">
    <location>
        <begin position="162"/>
        <end position="170"/>
    </location>
    <ligand>
        <name>ATP</name>
        <dbReference type="ChEBI" id="CHEBI:30616"/>
    </ligand>
</feature>
<feature type="binding site" evidence="4">
    <location>
        <position position="218"/>
    </location>
    <ligand>
        <name>ATP</name>
        <dbReference type="ChEBI" id="CHEBI:30616"/>
    </ligand>
</feature>
<feature type="modified residue" description="Phosphoserine; by autocatalysis" evidence="2">
    <location>
        <position position="227"/>
    </location>
</feature>
<feature type="modified residue" description="Phosphoserine; by autocatalysis" evidence="2">
    <location>
        <position position="401"/>
    </location>
</feature>
<dbReference type="EC" id="2.7.11.1" evidence="2"/>
<dbReference type="EMBL" id="AABR07050212">
    <property type="status" value="NOT_ANNOTATED_CDS"/>
    <property type="molecule type" value="Genomic_DNA"/>
</dbReference>
<dbReference type="EMBL" id="BC169047">
    <property type="protein sequence ID" value="AAI69047.1"/>
    <property type="molecule type" value="mRNA"/>
</dbReference>
<dbReference type="SMR" id="B5DFG1"/>
<dbReference type="FunCoup" id="B5DFG1">
    <property type="interactions" value="934"/>
</dbReference>
<dbReference type="STRING" id="10116.ENSRNOP00000069316"/>
<dbReference type="GlyGen" id="B5DFG1">
    <property type="glycosylation" value="1 site, 1 O-linked glycan (1 site)"/>
</dbReference>
<dbReference type="PhosphoSitePlus" id="B5DFG1"/>
<dbReference type="PaxDb" id="10116-ENSRNOP00000058880"/>
<dbReference type="ABCD" id="B5DFG1">
    <property type="antibodies" value="4 sequenced antibodies"/>
</dbReference>
<dbReference type="Ensembl" id="ENSRNOT00000083474.2">
    <property type="protein sequence ID" value="ENSRNOP00000069316.1"/>
    <property type="gene ID" value="ENSRNOG00000015385.8"/>
</dbReference>
<dbReference type="AGR" id="RGD:1305769"/>
<dbReference type="RGD" id="1305769">
    <property type="gene designation" value="Pink1"/>
</dbReference>
<dbReference type="GeneTree" id="ENSGT00390000001206"/>
<dbReference type="HOGENOM" id="CLU_022208_1_0_1"/>
<dbReference type="InParanoid" id="B5DFG1"/>
<dbReference type="OMA" id="TCCSLRN"/>
<dbReference type="OrthoDB" id="1405469at2759"/>
<dbReference type="TreeFam" id="TF313183"/>
<dbReference type="Reactome" id="R-RNO-5205685">
    <property type="pathway name" value="PINK1-PRKN Mediated Mitophagy"/>
</dbReference>
<dbReference type="PRO" id="PR:B5DFG1"/>
<dbReference type="Proteomes" id="UP000002494">
    <property type="component" value="Chromosome 5"/>
</dbReference>
<dbReference type="Bgee" id="ENSRNOG00000015385">
    <property type="expression patterns" value="Expressed in skeletal muscle tissue and 19 other cell types or tissues"/>
</dbReference>
<dbReference type="ExpressionAtlas" id="B5DFG1">
    <property type="expression patterns" value="baseline and differential"/>
</dbReference>
<dbReference type="GO" id="GO:0097449">
    <property type="term" value="C:astrocyte projection"/>
    <property type="evidence" value="ECO:0000266"/>
    <property type="project" value="RGD"/>
</dbReference>
<dbReference type="GO" id="GO:0030424">
    <property type="term" value="C:axon"/>
    <property type="evidence" value="ECO:0000266"/>
    <property type="project" value="RGD"/>
</dbReference>
<dbReference type="GO" id="GO:0044297">
    <property type="term" value="C:cell body"/>
    <property type="evidence" value="ECO:0000266"/>
    <property type="project" value="RGD"/>
</dbReference>
<dbReference type="GO" id="GO:0000785">
    <property type="term" value="C:chromatin"/>
    <property type="evidence" value="ECO:0000266"/>
    <property type="project" value="RGD"/>
</dbReference>
<dbReference type="GO" id="GO:0005737">
    <property type="term" value="C:cytoplasm"/>
    <property type="evidence" value="ECO:0000266"/>
    <property type="project" value="RGD"/>
</dbReference>
<dbReference type="GO" id="GO:0005856">
    <property type="term" value="C:cytoskeleton"/>
    <property type="evidence" value="ECO:0000266"/>
    <property type="project" value="RGD"/>
</dbReference>
<dbReference type="GO" id="GO:0005829">
    <property type="term" value="C:cytosol"/>
    <property type="evidence" value="ECO:0000266"/>
    <property type="project" value="RGD"/>
</dbReference>
<dbReference type="GO" id="GO:0005783">
    <property type="term" value="C:endoplasmic reticulum"/>
    <property type="evidence" value="ECO:0000314"/>
    <property type="project" value="UniProtKB"/>
</dbReference>
<dbReference type="GO" id="GO:0030426">
    <property type="term" value="C:growth cone"/>
    <property type="evidence" value="ECO:0000314"/>
    <property type="project" value="RGD"/>
</dbReference>
<dbReference type="GO" id="GO:0016020">
    <property type="term" value="C:membrane"/>
    <property type="evidence" value="ECO:0000266"/>
    <property type="project" value="RGD"/>
</dbReference>
<dbReference type="GO" id="GO:0005743">
    <property type="term" value="C:mitochondrial inner membrane"/>
    <property type="evidence" value="ECO:0000314"/>
    <property type="project" value="RGD"/>
</dbReference>
<dbReference type="GO" id="GO:0005758">
    <property type="term" value="C:mitochondrial intermembrane space"/>
    <property type="evidence" value="ECO:0000266"/>
    <property type="project" value="RGD"/>
</dbReference>
<dbReference type="GO" id="GO:0005741">
    <property type="term" value="C:mitochondrial outer membrane"/>
    <property type="evidence" value="ECO:0000314"/>
    <property type="project" value="RGD"/>
</dbReference>
<dbReference type="GO" id="GO:0005739">
    <property type="term" value="C:mitochondrion"/>
    <property type="evidence" value="ECO:0000314"/>
    <property type="project" value="UniProtKB"/>
</dbReference>
<dbReference type="GO" id="GO:0005634">
    <property type="term" value="C:nucleus"/>
    <property type="evidence" value="ECO:0000266"/>
    <property type="project" value="RGD"/>
</dbReference>
<dbReference type="GO" id="GO:0048471">
    <property type="term" value="C:perinuclear region of cytoplasm"/>
    <property type="evidence" value="ECO:0000266"/>
    <property type="project" value="RGD"/>
</dbReference>
<dbReference type="GO" id="GO:0005524">
    <property type="term" value="F:ATP binding"/>
    <property type="evidence" value="ECO:0000266"/>
    <property type="project" value="RGD"/>
</dbReference>
<dbReference type="GO" id="GO:0055131">
    <property type="term" value="F:C3HC4-type RING finger domain binding"/>
    <property type="evidence" value="ECO:0000266"/>
    <property type="project" value="RGD"/>
</dbReference>
<dbReference type="GO" id="GO:0016301">
    <property type="term" value="F:kinase activity"/>
    <property type="evidence" value="ECO:0000266"/>
    <property type="project" value="RGD"/>
</dbReference>
<dbReference type="GO" id="GO:0019900">
    <property type="term" value="F:kinase binding"/>
    <property type="evidence" value="ECO:0000266"/>
    <property type="project" value="RGD"/>
</dbReference>
<dbReference type="GO" id="GO:0000287">
    <property type="term" value="F:magnesium ion binding"/>
    <property type="evidence" value="ECO:0000266"/>
    <property type="project" value="RGD"/>
</dbReference>
<dbReference type="GO" id="GO:0002020">
    <property type="term" value="F:protease binding"/>
    <property type="evidence" value="ECO:0000266"/>
    <property type="project" value="RGD"/>
</dbReference>
<dbReference type="GO" id="GO:0004672">
    <property type="term" value="F:protein kinase activity"/>
    <property type="evidence" value="ECO:0000266"/>
    <property type="project" value="RGD"/>
</dbReference>
<dbReference type="GO" id="GO:0043422">
    <property type="term" value="F:protein kinase B binding"/>
    <property type="evidence" value="ECO:0000266"/>
    <property type="project" value="RGD"/>
</dbReference>
<dbReference type="GO" id="GO:0106310">
    <property type="term" value="F:protein serine kinase activity"/>
    <property type="evidence" value="ECO:0000266"/>
    <property type="project" value="RGD"/>
</dbReference>
<dbReference type="GO" id="GO:0004674">
    <property type="term" value="F:protein serine/threonine kinase activity"/>
    <property type="evidence" value="ECO:0000266"/>
    <property type="project" value="RGD"/>
</dbReference>
<dbReference type="GO" id="GO:0044877">
    <property type="term" value="F:protein-containing complex binding"/>
    <property type="evidence" value="ECO:0000266"/>
    <property type="project" value="RGD"/>
</dbReference>
<dbReference type="GO" id="GO:0031625">
    <property type="term" value="F:ubiquitin protein ligase binding"/>
    <property type="evidence" value="ECO:0000353"/>
    <property type="project" value="RGD"/>
</dbReference>
<dbReference type="GO" id="GO:0000422">
    <property type="term" value="P:autophagy of mitochondrion"/>
    <property type="evidence" value="ECO:0000266"/>
    <property type="project" value="RGD"/>
</dbReference>
<dbReference type="GO" id="GO:0050432">
    <property type="term" value="P:catecholamine secretion"/>
    <property type="evidence" value="ECO:0000266"/>
    <property type="project" value="RGD"/>
</dbReference>
<dbReference type="GO" id="GO:1904881">
    <property type="term" value="P:cellular response to hydrogen sulfide"/>
    <property type="evidence" value="ECO:0000314"/>
    <property type="project" value="RGD"/>
</dbReference>
<dbReference type="GO" id="GO:0071456">
    <property type="term" value="P:cellular response to hypoxia"/>
    <property type="evidence" value="ECO:0000266"/>
    <property type="project" value="RGD"/>
</dbReference>
<dbReference type="GO" id="GO:0034599">
    <property type="term" value="P:cellular response to oxidative stress"/>
    <property type="evidence" value="ECO:0000266"/>
    <property type="project" value="RGD"/>
</dbReference>
<dbReference type="GO" id="GO:0097237">
    <property type="term" value="P:cellular response to toxic substance"/>
    <property type="evidence" value="ECO:0000266"/>
    <property type="project" value="RGD"/>
</dbReference>
<dbReference type="GO" id="GO:0014046">
    <property type="term" value="P:dopamine secretion"/>
    <property type="evidence" value="ECO:0000266"/>
    <property type="project" value="RGD"/>
</dbReference>
<dbReference type="GO" id="GO:0051649">
    <property type="term" value="P:establishment of localization in cell"/>
    <property type="evidence" value="ECO:0000266"/>
    <property type="project" value="RGD"/>
</dbReference>
<dbReference type="GO" id="GO:0072655">
    <property type="term" value="P:establishment of protein localization to mitochondrion"/>
    <property type="evidence" value="ECO:0000266"/>
    <property type="project" value="RGD"/>
</dbReference>
<dbReference type="GO" id="GO:0030097">
    <property type="term" value="P:hemopoiesis"/>
    <property type="evidence" value="ECO:0000266"/>
    <property type="project" value="RGD"/>
</dbReference>
<dbReference type="GO" id="GO:0035556">
    <property type="term" value="P:intracellular signal transduction"/>
    <property type="evidence" value="ECO:0000266"/>
    <property type="project" value="RGD"/>
</dbReference>
<dbReference type="GO" id="GO:0072656">
    <property type="term" value="P:maintenance of protein location in mitochondrion"/>
    <property type="evidence" value="ECO:0000266"/>
    <property type="project" value="RGD"/>
</dbReference>
<dbReference type="GO" id="GO:0000266">
    <property type="term" value="P:mitochondrial fission"/>
    <property type="evidence" value="ECO:0007001"/>
    <property type="project" value="RGD"/>
</dbReference>
<dbReference type="GO" id="GO:0007005">
    <property type="term" value="P:mitochondrion organization"/>
    <property type="evidence" value="ECO:0000266"/>
    <property type="project" value="RGD"/>
</dbReference>
<dbReference type="GO" id="GO:0099074">
    <property type="term" value="P:mitochondrion to lysosome vesicle-mediated transport"/>
    <property type="evidence" value="ECO:0000266"/>
    <property type="project" value="RGD"/>
</dbReference>
<dbReference type="GO" id="GO:0000423">
    <property type="term" value="P:mitophagy"/>
    <property type="evidence" value="ECO:0000315"/>
    <property type="project" value="RGD"/>
</dbReference>
<dbReference type="GO" id="GO:0043066">
    <property type="term" value="P:negative regulation of apoptotic process"/>
    <property type="evidence" value="ECO:0000315"/>
    <property type="project" value="RGD"/>
</dbReference>
<dbReference type="GO" id="GO:1902902">
    <property type="term" value="P:negative regulation of autophagosome assembly"/>
    <property type="evidence" value="ECO:0000266"/>
    <property type="project" value="RGD"/>
</dbReference>
<dbReference type="GO" id="GO:0031999">
    <property type="term" value="P:negative regulation of fatty acid beta-oxidation"/>
    <property type="evidence" value="ECO:0007001"/>
    <property type="project" value="RGD"/>
</dbReference>
<dbReference type="GO" id="GO:0010629">
    <property type="term" value="P:negative regulation of gene expression"/>
    <property type="evidence" value="ECO:0000266"/>
    <property type="project" value="RGD"/>
</dbReference>
<dbReference type="GO" id="GO:1903384">
    <property type="term" value="P:negative regulation of hydrogen peroxide-induced neuron intrinsic apoptotic signaling pathway"/>
    <property type="evidence" value="ECO:0000266"/>
    <property type="project" value="RGD"/>
</dbReference>
<dbReference type="GO" id="GO:1903298">
    <property type="term" value="P:negative regulation of hypoxia-induced intrinsic apoptotic signaling pathway"/>
    <property type="evidence" value="ECO:0000266"/>
    <property type="project" value="RGD"/>
</dbReference>
<dbReference type="GO" id="GO:2001243">
    <property type="term" value="P:negative regulation of intrinsic apoptotic signaling pathway"/>
    <property type="evidence" value="ECO:0000266"/>
    <property type="project" value="RGD"/>
</dbReference>
<dbReference type="GO" id="GO:1903751">
    <property type="term" value="P:negative regulation of intrinsic apoptotic signaling pathway in response to hydrogen peroxide"/>
    <property type="evidence" value="ECO:0000266"/>
    <property type="project" value="RGD"/>
</dbReference>
<dbReference type="GO" id="GO:0016242">
    <property type="term" value="P:negative regulation of macroautophagy"/>
    <property type="evidence" value="ECO:0000266"/>
    <property type="project" value="RGD"/>
</dbReference>
<dbReference type="GO" id="GO:0090258">
    <property type="term" value="P:negative regulation of mitochondrial fission"/>
    <property type="evidence" value="ECO:0000266"/>
    <property type="project" value="RGD"/>
</dbReference>
<dbReference type="GO" id="GO:1901525">
    <property type="term" value="P:negative regulation of mitophagy"/>
    <property type="evidence" value="ECO:0000266"/>
    <property type="project" value="RGD"/>
</dbReference>
<dbReference type="GO" id="GO:0043524">
    <property type="term" value="P:negative regulation of neuron apoptotic process"/>
    <property type="evidence" value="ECO:0000266"/>
    <property type="project" value="RGD"/>
</dbReference>
<dbReference type="GO" id="GO:1903377">
    <property type="term" value="P:negative regulation of oxidative stress-induced neuron intrinsic apoptotic signaling pathway"/>
    <property type="evidence" value="ECO:0000266"/>
    <property type="project" value="RGD"/>
</dbReference>
<dbReference type="GO" id="GO:2000378">
    <property type="term" value="P:negative regulation of reactive oxygen species metabolic process"/>
    <property type="evidence" value="ECO:0000266"/>
    <property type="project" value="RGD"/>
</dbReference>
<dbReference type="GO" id="GO:0043123">
    <property type="term" value="P:positive regulation of canonical NF-kappaB signal transduction"/>
    <property type="evidence" value="ECO:0000266"/>
    <property type="project" value="RGD"/>
</dbReference>
<dbReference type="GO" id="GO:0033605">
    <property type="term" value="P:positive regulation of catecholamine secretion"/>
    <property type="evidence" value="ECO:0000266"/>
    <property type="project" value="RGD"/>
</dbReference>
<dbReference type="GO" id="GO:0030335">
    <property type="term" value="P:positive regulation of cell migration"/>
    <property type="evidence" value="ECO:0000266"/>
    <property type="project" value="RGD"/>
</dbReference>
<dbReference type="GO" id="GO:1903852">
    <property type="term" value="P:positive regulation of cristae formation"/>
    <property type="evidence" value="ECO:0000266"/>
    <property type="project" value="RGD"/>
</dbReference>
<dbReference type="GO" id="GO:0033603">
    <property type="term" value="P:positive regulation of dopamine secretion"/>
    <property type="evidence" value="ECO:0000266"/>
    <property type="project" value="RGD"/>
</dbReference>
<dbReference type="GO" id="GO:0016239">
    <property type="term" value="P:positive regulation of macroautophagy"/>
    <property type="evidence" value="ECO:0000266"/>
    <property type="project" value="RGD"/>
</dbReference>
<dbReference type="GO" id="GO:1902958">
    <property type="term" value="P:positive regulation of mitochondrial electron transport, NADH to ubiquinone"/>
    <property type="evidence" value="ECO:0000266"/>
    <property type="project" value="RGD"/>
</dbReference>
<dbReference type="GO" id="GO:0090141">
    <property type="term" value="P:positive regulation of mitochondrial fission"/>
    <property type="evidence" value="ECO:0000315"/>
    <property type="project" value="RGD"/>
</dbReference>
<dbReference type="GO" id="GO:0051897">
    <property type="term" value="P:positive regulation of phosphatidylinositol 3-kinase/protein kinase B signal transduction"/>
    <property type="evidence" value="ECO:0000266"/>
    <property type="project" value="RGD"/>
</dbReference>
<dbReference type="GO" id="GO:0090200">
    <property type="term" value="P:positive regulation of release of cytochrome c from mitochondria"/>
    <property type="evidence" value="ECO:0000266"/>
    <property type="project" value="RGD"/>
</dbReference>
<dbReference type="GO" id="GO:0032226">
    <property type="term" value="P:positive regulation of synaptic transmission, dopaminergic"/>
    <property type="evidence" value="ECO:0000266"/>
    <property type="project" value="RGD"/>
</dbReference>
<dbReference type="GO" id="GO:0045944">
    <property type="term" value="P:positive regulation of transcription by RNA polymerase II"/>
    <property type="evidence" value="ECO:0000266"/>
    <property type="project" value="RGD"/>
</dbReference>
<dbReference type="GO" id="GO:0045727">
    <property type="term" value="P:positive regulation of translation"/>
    <property type="evidence" value="ECO:0000266"/>
    <property type="project" value="RGD"/>
</dbReference>
<dbReference type="GO" id="GO:1905091">
    <property type="term" value="P:positive regulation of type 2 mitophagy"/>
    <property type="evidence" value="ECO:0000266"/>
    <property type="project" value="RGD"/>
</dbReference>
<dbReference type="GO" id="GO:0006468">
    <property type="term" value="P:protein phosphorylation"/>
    <property type="evidence" value="ECO:0000250"/>
    <property type="project" value="UniProtKB"/>
</dbReference>
<dbReference type="GO" id="GO:0050821">
    <property type="term" value="P:protein stabilization"/>
    <property type="evidence" value="ECO:0000266"/>
    <property type="project" value="RGD"/>
</dbReference>
<dbReference type="GO" id="GO:0016567">
    <property type="term" value="P:protein ubiquitination"/>
    <property type="evidence" value="ECO:0000266"/>
    <property type="project" value="RGD"/>
</dbReference>
<dbReference type="GO" id="GO:0042981">
    <property type="term" value="P:regulation of apoptotic process"/>
    <property type="evidence" value="ECO:0000318"/>
    <property type="project" value="GO_Central"/>
</dbReference>
<dbReference type="GO" id="GO:1900407">
    <property type="term" value="P:regulation of cellular response to oxidative stress"/>
    <property type="evidence" value="ECO:0000266"/>
    <property type="project" value="RGD"/>
</dbReference>
<dbReference type="GO" id="GO:0010310">
    <property type="term" value="P:regulation of hydrogen peroxide metabolic process"/>
    <property type="evidence" value="ECO:0000266"/>
    <property type="project" value="RGD"/>
</dbReference>
<dbReference type="GO" id="GO:0051881">
    <property type="term" value="P:regulation of mitochondrial membrane potential"/>
    <property type="evidence" value="ECO:0000266"/>
    <property type="project" value="RGD"/>
</dbReference>
<dbReference type="GO" id="GO:0010821">
    <property type="term" value="P:regulation of mitochondrion organization"/>
    <property type="evidence" value="ECO:0000266"/>
    <property type="project" value="RGD"/>
</dbReference>
<dbReference type="GO" id="GO:0043523">
    <property type="term" value="P:regulation of neuron apoptotic process"/>
    <property type="evidence" value="ECO:0000266"/>
    <property type="project" value="RGD"/>
</dbReference>
<dbReference type="GO" id="GO:0002082">
    <property type="term" value="P:regulation of oxidative phosphorylation"/>
    <property type="evidence" value="ECO:0000266"/>
    <property type="project" value="RGD"/>
</dbReference>
<dbReference type="GO" id="GO:1903214">
    <property type="term" value="P:regulation of protein targeting to mitochondrion"/>
    <property type="evidence" value="ECO:0000266"/>
    <property type="project" value="RGD"/>
</dbReference>
<dbReference type="GO" id="GO:0031396">
    <property type="term" value="P:regulation of protein ubiquitination"/>
    <property type="evidence" value="ECO:0000266"/>
    <property type="project" value="RGD"/>
</dbReference>
<dbReference type="GO" id="GO:0043254">
    <property type="term" value="P:regulation of protein-containing complex assembly"/>
    <property type="evidence" value="ECO:0000266"/>
    <property type="project" value="RGD"/>
</dbReference>
<dbReference type="GO" id="GO:2000377">
    <property type="term" value="P:regulation of reactive oxygen species metabolic process"/>
    <property type="evidence" value="ECO:0000266"/>
    <property type="project" value="RGD"/>
</dbReference>
<dbReference type="GO" id="GO:0022904">
    <property type="term" value="P:respiratory electron transport chain"/>
    <property type="evidence" value="ECO:0000266"/>
    <property type="project" value="RGD"/>
</dbReference>
<dbReference type="GO" id="GO:0002931">
    <property type="term" value="P:response to ischemia"/>
    <property type="evidence" value="ECO:0000270"/>
    <property type="project" value="RGD"/>
</dbReference>
<dbReference type="GO" id="GO:0006979">
    <property type="term" value="P:response to oxidative stress"/>
    <property type="evidence" value="ECO:0000266"/>
    <property type="project" value="RGD"/>
</dbReference>
<dbReference type="GO" id="GO:0038203">
    <property type="term" value="P:TORC2 signaling"/>
    <property type="evidence" value="ECO:0000266"/>
    <property type="project" value="RGD"/>
</dbReference>
<dbReference type="CDD" id="cd14018">
    <property type="entry name" value="STKc_PINK1"/>
    <property type="match status" value="1"/>
</dbReference>
<dbReference type="FunFam" id="1.10.510.10:FF:000418">
    <property type="entry name" value="PTEN induced kinase 1"/>
    <property type="match status" value="1"/>
</dbReference>
<dbReference type="Gene3D" id="1.10.510.10">
    <property type="entry name" value="Transferase(Phosphotransferase) domain 1"/>
    <property type="match status" value="1"/>
</dbReference>
<dbReference type="InterPro" id="IPR011009">
    <property type="entry name" value="Kinase-like_dom_sf"/>
</dbReference>
<dbReference type="InterPro" id="IPR051511">
    <property type="entry name" value="MitoQC_Scaffold_Kinases"/>
</dbReference>
<dbReference type="InterPro" id="IPR040110">
    <property type="entry name" value="PINK1_STKc"/>
</dbReference>
<dbReference type="InterPro" id="IPR000719">
    <property type="entry name" value="Prot_kinase_dom"/>
</dbReference>
<dbReference type="InterPro" id="IPR008271">
    <property type="entry name" value="Ser/Thr_kinase_AS"/>
</dbReference>
<dbReference type="PANTHER" id="PTHR22972">
    <property type="entry name" value="SERINE/THREONINE PROTEIN KINASE"/>
    <property type="match status" value="1"/>
</dbReference>
<dbReference type="PANTHER" id="PTHR22972:SF7">
    <property type="entry name" value="SERINE_THREONINE-PROTEIN KINASE PINK1, MITOCHONDRIAL"/>
    <property type="match status" value="1"/>
</dbReference>
<dbReference type="Pfam" id="PF00069">
    <property type="entry name" value="Pkinase"/>
    <property type="match status" value="1"/>
</dbReference>
<dbReference type="SMART" id="SM00220">
    <property type="entry name" value="S_TKc"/>
    <property type="match status" value="1"/>
</dbReference>
<dbReference type="SUPFAM" id="SSF56112">
    <property type="entry name" value="Protein kinase-like (PK-like)"/>
    <property type="match status" value="1"/>
</dbReference>
<dbReference type="PROSITE" id="PS50011">
    <property type="entry name" value="PROTEIN_KINASE_DOM"/>
    <property type="match status" value="1"/>
</dbReference>
<dbReference type="PROSITE" id="PS00108">
    <property type="entry name" value="PROTEIN_KINASE_ST"/>
    <property type="match status" value="1"/>
</dbReference>
<comment type="function">
    <text evidence="1 2">Serine/threonine-protein kinase which acts as a sensor of mitochondrial damage and protects against mitochondrial dysfunction during cellular stress. It phosphorylates mitochondrial proteins to coordinate mitochondrial quality control mechanisms that remove and replace dysfunctional mitochondrial components. Depending on the severity of mitochondrial damage, activity ranges from preventing apoptosis and stimulating mitochondrial biogenesis to eliminating severely damaged mitochondria via PINK1-PRKN-dependent mitophagy. When cellular stress results in irreversible mitochondrial damage, PINK1 accumulates at the outer mitochondrial membrane (OMM) where it phosphorylates pre-existing polyubiquitin chains at 'Ser-65', recruits PRKN from the cytosol to the OMM and activates PRKN by phosphorylation at 'Ser-65'; activated PRKN then ubiquinates VDAC1 and other OMM proteins to initiate mitophagy. The PINK1-PRKN pathway also promotes fission of damaged mitochondria through phosphorylation and PRKN-dependent degradation of mitochondrial proteins involved in fission such as MFN2. This prevents the refusion of unhealthy mitochondria with the mitochondrial network or initiates mitochondrial fragmentation facilitating their later engulfment by autophagosomes. Also promotes mitochondrial fission independently of PRKN and ATG7-mediated mitophagy, via the phosphorylation and activation of DNM1L. Regulates motility of damaged mitochondria by promoting the ubiquitination and subsequent degradation of MIRO1 and MIRO2; in motor neurons, this likely inhibits mitochondrial intracellular anterograde transport along the axons which probably increases the chance of the mitochondria undergoing mitophagy in the soma (By similarity). Required for ubiquinone reduction by mitochondrial complex I by mediating phosphorylation of complex I subunit NDUFA10 (By similarity). Phosphorylates LETM1, positively regulating its mitochondrial calcium transport activity (By similarity).</text>
</comment>
<comment type="catalytic activity">
    <reaction evidence="2">
        <text>L-seryl-[protein] + ATP = O-phospho-L-seryl-[protein] + ADP + H(+)</text>
        <dbReference type="Rhea" id="RHEA:17989"/>
        <dbReference type="Rhea" id="RHEA-COMP:9863"/>
        <dbReference type="Rhea" id="RHEA-COMP:11604"/>
        <dbReference type="ChEBI" id="CHEBI:15378"/>
        <dbReference type="ChEBI" id="CHEBI:29999"/>
        <dbReference type="ChEBI" id="CHEBI:30616"/>
        <dbReference type="ChEBI" id="CHEBI:83421"/>
        <dbReference type="ChEBI" id="CHEBI:456216"/>
        <dbReference type="EC" id="2.7.11.1"/>
    </reaction>
</comment>
<comment type="catalytic activity">
    <reaction evidence="2">
        <text>L-threonyl-[protein] + ATP = O-phospho-L-threonyl-[protein] + ADP + H(+)</text>
        <dbReference type="Rhea" id="RHEA:46608"/>
        <dbReference type="Rhea" id="RHEA-COMP:11060"/>
        <dbReference type="Rhea" id="RHEA-COMP:11605"/>
        <dbReference type="ChEBI" id="CHEBI:15378"/>
        <dbReference type="ChEBI" id="CHEBI:30013"/>
        <dbReference type="ChEBI" id="CHEBI:30616"/>
        <dbReference type="ChEBI" id="CHEBI:61977"/>
        <dbReference type="ChEBI" id="CHEBI:456216"/>
        <dbReference type="EC" id="2.7.11.1"/>
    </reaction>
</comment>
<comment type="cofactor">
    <cofactor evidence="2">
        <name>Mg(2+)</name>
        <dbReference type="ChEBI" id="CHEBI:18420"/>
    </cofactor>
</comment>
<comment type="subunit">
    <text evidence="2 7">Upon mitochondrial depolarization, it forms a supercomplex with TOM and TIM23 complexes (By similarity). PINK1-TOM-TIM23 supercomplex formation requires PINK1 interaction with TOMM20 and TOMM70 and is critical for PINK1 stabilization at the outer mitochondrial membrane, kinase activation and downstream mitophagy (By similarity). Upon mitochondrial depolarization, interacts with TIMM23; the interaction is required for PINK1 accumulation at the outer mitochondrial membrane, kinase activation by autophosphorylation and PRKN recruitement to mitochondria (By similarity). Interacts with PRKN. Interacts with FBXO7. Forms a complex with PRKN and PARK7 (By similarity). Interacts with NENF (PubMed:31536960).</text>
</comment>
<comment type="subcellular location">
    <subcellularLocation>
        <location evidence="7">Mitochondrion outer membrane</location>
        <topology evidence="3">Single-pass membrane protein</topology>
    </subcellularLocation>
    <subcellularLocation>
        <location evidence="1">Mitochondrion inner membrane</location>
        <topology evidence="3">Single-pass membrane protein</topology>
    </subcellularLocation>
    <subcellularLocation>
        <location evidence="2">Cytoplasm</location>
        <location evidence="2">Cytosol</location>
    </subcellularLocation>
    <text evidence="2">Localizes mostly in mitochondrion and the two smaller proteolytic processed fragments localize mainly in cytosol. When mitochondria lose mitochondrial membrane potential following damage, PINK1 import is arrested, which induces its accumulation in the outer mitochondrial membrane, where it acquires kinase activity.</text>
</comment>
<comment type="developmental stage">
    <text evidence="6">Weakly expressed in neurons at 18.5 dpc (at protein level).</text>
</comment>
<comment type="induction">
    <text evidence="6">Induced by oxygen and glucose deprivation in neuronal cells.</text>
</comment>
<comment type="PTM">
    <text evidence="2">Proteolytically cleaved. In healthy cells, the precursor is continuously imported into the inner mitochondrial membrane (IMM), where it is proteolytically cleaved by mitochondrial-processing peptidase (MPP) and then undergoes further proteolytic cleavage by PARL or AFG3L2 to give rise to the 52 kDa short form. The 52 kDa short form is then released into the cytosol where it rapidly undergoes proteasome-dependent degradation. In unhealthy cells, when cellular stress conditions lead to the loss of mitochondrial membrane potential, mitochondrial import is impaired leading to the precursor accumulating on the outer mitochondrial membrane (OMM). If accumulation at the OMM fails and it is imported into the depolarized mitochondria, it undergoes cleavage by the IMM protease OMA1, promoting its subsequent degradation by the proteasome.</text>
</comment>
<comment type="PTM">
    <text evidence="2">Autophosphorylated. Loss of mitochondrial membrane potential results in the precursor accumulating on the outer mitochondrial membrane (OMM) where it is activated by autophosphorylation. Autophosphorylation at Ser-227 and Ser-401 is sufficient and essential for selective recruitment of PRKN to depolarized mitochondria, via PINK1-dependent phosphorylation of ubiquitin and maybe PRKN.</text>
</comment>
<comment type="similarity">
    <text evidence="4">Belongs to the protein kinase superfamily. Ser/Thr protein kinase family.</text>
</comment>
<accession>B5DFG1</accession>
<reference key="1">
    <citation type="journal article" date="2004" name="Nature">
        <title>Genome sequence of the Brown Norway rat yields insights into mammalian evolution.</title>
        <authorList>
            <person name="Gibbs R.A."/>
            <person name="Weinstock G.M."/>
            <person name="Metzker M.L."/>
            <person name="Muzny D.M."/>
            <person name="Sodergren E.J."/>
            <person name="Scherer S."/>
            <person name="Scott G."/>
            <person name="Steffen D."/>
            <person name="Worley K.C."/>
            <person name="Burch P.E."/>
            <person name="Okwuonu G."/>
            <person name="Hines S."/>
            <person name="Lewis L."/>
            <person name="Deramo C."/>
            <person name="Delgado O."/>
            <person name="Dugan-Rocha S."/>
            <person name="Miner G."/>
            <person name="Morgan M."/>
            <person name="Hawes A."/>
            <person name="Gill R."/>
            <person name="Holt R.A."/>
            <person name="Adams M.D."/>
            <person name="Amanatides P.G."/>
            <person name="Baden-Tillson H."/>
            <person name="Barnstead M."/>
            <person name="Chin S."/>
            <person name="Evans C.A."/>
            <person name="Ferriera S."/>
            <person name="Fosler C."/>
            <person name="Glodek A."/>
            <person name="Gu Z."/>
            <person name="Jennings D."/>
            <person name="Kraft C.L."/>
            <person name="Nguyen T."/>
            <person name="Pfannkoch C.M."/>
            <person name="Sitter C."/>
            <person name="Sutton G.G."/>
            <person name="Venter J.C."/>
            <person name="Woodage T."/>
            <person name="Smith D."/>
            <person name="Lee H.-M."/>
            <person name="Gustafson E."/>
            <person name="Cahill P."/>
            <person name="Kana A."/>
            <person name="Doucette-Stamm L."/>
            <person name="Weinstock K."/>
            <person name="Fechtel K."/>
            <person name="Weiss R.B."/>
            <person name="Dunn D.M."/>
            <person name="Green E.D."/>
            <person name="Blakesley R.W."/>
            <person name="Bouffard G.G."/>
            <person name="De Jong P.J."/>
            <person name="Osoegawa K."/>
            <person name="Zhu B."/>
            <person name="Marra M."/>
            <person name="Schein J."/>
            <person name="Bosdet I."/>
            <person name="Fjell C."/>
            <person name="Jones S."/>
            <person name="Krzywinski M."/>
            <person name="Mathewson C."/>
            <person name="Siddiqui A."/>
            <person name="Wye N."/>
            <person name="McPherson J."/>
            <person name="Zhao S."/>
            <person name="Fraser C.M."/>
            <person name="Shetty J."/>
            <person name="Shatsman S."/>
            <person name="Geer K."/>
            <person name="Chen Y."/>
            <person name="Abramzon S."/>
            <person name="Nierman W.C."/>
            <person name="Havlak P.H."/>
            <person name="Chen R."/>
            <person name="Durbin K.J."/>
            <person name="Egan A."/>
            <person name="Ren Y."/>
            <person name="Song X.-Z."/>
            <person name="Li B."/>
            <person name="Liu Y."/>
            <person name="Qin X."/>
            <person name="Cawley S."/>
            <person name="Cooney A.J."/>
            <person name="D'Souza L.M."/>
            <person name="Martin K."/>
            <person name="Wu J.Q."/>
            <person name="Gonzalez-Garay M.L."/>
            <person name="Jackson A.R."/>
            <person name="Kalafus K.J."/>
            <person name="McLeod M.P."/>
            <person name="Milosavljevic A."/>
            <person name="Virk D."/>
            <person name="Volkov A."/>
            <person name="Wheeler D.A."/>
            <person name="Zhang Z."/>
            <person name="Bailey J.A."/>
            <person name="Eichler E.E."/>
            <person name="Tuzun E."/>
            <person name="Birney E."/>
            <person name="Mongin E."/>
            <person name="Ureta-Vidal A."/>
            <person name="Woodwark C."/>
            <person name="Zdobnov E."/>
            <person name="Bork P."/>
            <person name="Suyama M."/>
            <person name="Torrents D."/>
            <person name="Alexandersson M."/>
            <person name="Trask B.J."/>
            <person name="Young J.M."/>
            <person name="Huang H."/>
            <person name="Wang H."/>
            <person name="Xing H."/>
            <person name="Daniels S."/>
            <person name="Gietzen D."/>
            <person name="Schmidt J."/>
            <person name="Stevens K."/>
            <person name="Vitt U."/>
            <person name="Wingrove J."/>
            <person name="Camara F."/>
            <person name="Mar Alba M."/>
            <person name="Abril J.F."/>
            <person name="Guigo R."/>
            <person name="Smit A."/>
            <person name="Dubchak I."/>
            <person name="Rubin E.M."/>
            <person name="Couronne O."/>
            <person name="Poliakov A."/>
            <person name="Huebner N."/>
            <person name="Ganten D."/>
            <person name="Goesele C."/>
            <person name="Hummel O."/>
            <person name="Kreitler T."/>
            <person name="Lee Y.-A."/>
            <person name="Monti J."/>
            <person name="Schulz H."/>
            <person name="Zimdahl H."/>
            <person name="Himmelbauer H."/>
            <person name="Lehrach H."/>
            <person name="Jacob H.J."/>
            <person name="Bromberg S."/>
            <person name="Gullings-Handley J."/>
            <person name="Jensen-Seaman M.I."/>
            <person name="Kwitek A.E."/>
            <person name="Lazar J."/>
            <person name="Pasko D."/>
            <person name="Tonellato P.J."/>
            <person name="Twigger S."/>
            <person name="Ponting C.P."/>
            <person name="Duarte J.M."/>
            <person name="Rice S."/>
            <person name="Goodstadt L."/>
            <person name="Beatson S.A."/>
            <person name="Emes R.D."/>
            <person name="Winter E.E."/>
            <person name="Webber C."/>
            <person name="Brandt P."/>
            <person name="Nyakatura G."/>
            <person name="Adetobi M."/>
            <person name="Chiaromonte F."/>
            <person name="Elnitski L."/>
            <person name="Eswara P."/>
            <person name="Hardison R.C."/>
            <person name="Hou M."/>
            <person name="Kolbe D."/>
            <person name="Makova K."/>
            <person name="Miller W."/>
            <person name="Nekrutenko A."/>
            <person name="Riemer C."/>
            <person name="Schwartz S."/>
            <person name="Taylor J."/>
            <person name="Yang S."/>
            <person name="Zhang Y."/>
            <person name="Lindpaintner K."/>
            <person name="Andrews T.D."/>
            <person name="Caccamo M."/>
            <person name="Clamp M."/>
            <person name="Clarke L."/>
            <person name="Curwen V."/>
            <person name="Durbin R.M."/>
            <person name="Eyras E."/>
            <person name="Searle S.M."/>
            <person name="Cooper G.M."/>
            <person name="Batzoglou S."/>
            <person name="Brudno M."/>
            <person name="Sidow A."/>
            <person name="Stone E.A."/>
            <person name="Payseur B.A."/>
            <person name="Bourque G."/>
            <person name="Lopez-Otin C."/>
            <person name="Puente X.S."/>
            <person name="Chakrabarti K."/>
            <person name="Chatterji S."/>
            <person name="Dewey C."/>
            <person name="Pachter L."/>
            <person name="Bray N."/>
            <person name="Yap V.B."/>
            <person name="Caspi A."/>
            <person name="Tesler G."/>
            <person name="Pevzner P.A."/>
            <person name="Haussler D."/>
            <person name="Roskin K.M."/>
            <person name="Baertsch R."/>
            <person name="Clawson H."/>
            <person name="Furey T.S."/>
            <person name="Hinrichs A.S."/>
            <person name="Karolchik D."/>
            <person name="Kent W.J."/>
            <person name="Rosenbloom K.R."/>
            <person name="Trumbower H."/>
            <person name="Weirauch M."/>
            <person name="Cooper D.N."/>
            <person name="Stenson P.D."/>
            <person name="Ma B."/>
            <person name="Brent M."/>
            <person name="Arumugam M."/>
            <person name="Shteynberg D."/>
            <person name="Copley R.R."/>
            <person name="Taylor M.S."/>
            <person name="Riethman H."/>
            <person name="Mudunuri U."/>
            <person name="Peterson J."/>
            <person name="Guyer M."/>
            <person name="Felsenfeld A."/>
            <person name="Old S."/>
            <person name="Mockrin S."/>
            <person name="Collins F.S."/>
        </authorList>
    </citation>
    <scope>NUCLEOTIDE SEQUENCE [LARGE SCALE GENOMIC DNA]</scope>
    <source>
        <strain>Brown Norway</strain>
    </source>
</reference>
<reference key="2">
    <citation type="journal article" date="2004" name="Genome Res.">
        <title>The status, quality, and expansion of the NIH full-length cDNA project: the Mammalian Gene Collection (MGC).</title>
        <authorList>
            <consortium name="The MGC Project Team"/>
        </authorList>
    </citation>
    <scope>NUCLEOTIDE SEQUENCE [LARGE SCALE MRNA]</scope>
    <source>
        <tissue evidence="9">Heart</tissue>
    </source>
</reference>
<reference key="3">
    <citation type="journal article" date="2018" name="J. Neurosci.">
        <title>Neuronal Preconditioning Requires the Mitophagic Activity of C-terminus of HSC70-Interacting Protein.</title>
        <authorList>
            <person name="Lizama B.N."/>
            <person name="Palubinsky A.M."/>
            <person name="Raveendran V.A."/>
            <person name="Moore A.M."/>
            <person name="Federspiel J.D."/>
            <person name="Codreanu S.G."/>
            <person name="Liebler D.C."/>
            <person name="McLaughlin B."/>
        </authorList>
    </citation>
    <scope>DEVELOPMENTAL STAGE</scope>
    <scope>INDUCTION BY OXYGEN AND GLUCOSE DEPRIVATION</scope>
</reference>
<reference evidence="8" key="4">
    <citation type="journal article" date="2019" name="IScience">
        <title>Rewiring of the Human Mitochondrial Interactome during Neuronal Reprogramming Reveals Regulators of the Respirasome and Neurogenesis.</title>
        <authorList>
            <person name="Moutaoufik M.T."/>
            <person name="Malty R."/>
            <person name="Amin S."/>
            <person name="Zhang Q."/>
            <person name="Phanse S."/>
            <person name="Gagarinova A."/>
            <person name="Zilocchi M."/>
            <person name="Hoell L."/>
            <person name="Minic Z."/>
            <person name="Gagarinova M."/>
            <person name="Aoki H."/>
            <person name="Stockwell J."/>
            <person name="Jessulat M."/>
            <person name="Goebels F."/>
            <person name="Broderick K."/>
            <person name="Scott N.E."/>
            <person name="Vlasblom J."/>
            <person name="Musso G."/>
            <person name="Prasad B."/>
            <person name="Lamantea E."/>
            <person name="Garavaglia B."/>
            <person name="Rajput A."/>
            <person name="Murayama K."/>
            <person name="Okazaki Y."/>
            <person name="Foster L.J."/>
            <person name="Bader G.D."/>
            <person name="Cayabyab F.S."/>
            <person name="Babu M."/>
        </authorList>
    </citation>
    <scope>INTERACTION WITH NENF</scope>
    <scope>SUBCELLULAR LOCATION</scope>
</reference>
<protein>
    <recommendedName>
        <fullName evidence="2">Serine/threonine-protein kinase PINK1, mitochondrial</fullName>
        <ecNumber evidence="2">2.7.11.1</ecNumber>
    </recommendedName>
    <alternativeName>
        <fullName>PTEN-induced putative kinase 1</fullName>
    </alternativeName>
</protein>
<evidence type="ECO:0000250" key="1">
    <source>
        <dbReference type="UniProtKB" id="Q99MQ3"/>
    </source>
</evidence>
<evidence type="ECO:0000250" key="2">
    <source>
        <dbReference type="UniProtKB" id="Q9BXM7"/>
    </source>
</evidence>
<evidence type="ECO:0000255" key="3"/>
<evidence type="ECO:0000255" key="4">
    <source>
        <dbReference type="PROSITE-ProRule" id="PRU00159"/>
    </source>
</evidence>
<evidence type="ECO:0000256" key="5">
    <source>
        <dbReference type="SAM" id="MobiDB-lite"/>
    </source>
</evidence>
<evidence type="ECO:0000269" key="6">
    <source>
    </source>
</evidence>
<evidence type="ECO:0000269" key="7">
    <source>
    </source>
</evidence>
<evidence type="ECO:0000305" key="8"/>
<evidence type="ECO:0000312" key="9">
    <source>
        <dbReference type="EMBL" id="AAI69047.1"/>
    </source>
</evidence>
<evidence type="ECO:0000312" key="10">
    <source>
        <dbReference type="RGD" id="1305769"/>
    </source>
</evidence>
<gene>
    <name evidence="10" type="primary">Pink1</name>
</gene>
<organism evidence="9">
    <name type="scientific">Rattus norvegicus</name>
    <name type="common">Rat</name>
    <dbReference type="NCBI Taxonomy" id="10116"/>
    <lineage>
        <taxon>Eukaryota</taxon>
        <taxon>Metazoa</taxon>
        <taxon>Chordata</taxon>
        <taxon>Craniata</taxon>
        <taxon>Vertebrata</taxon>
        <taxon>Euteleostomi</taxon>
        <taxon>Mammalia</taxon>
        <taxon>Eutheria</taxon>
        <taxon>Euarchontoglires</taxon>
        <taxon>Glires</taxon>
        <taxon>Rodentia</taxon>
        <taxon>Myomorpha</taxon>
        <taxon>Muroidea</taxon>
        <taxon>Muridae</taxon>
        <taxon>Murinae</taxon>
        <taxon>Rattus</taxon>
    </lineage>
</organism>